<dbReference type="EC" id="2.4.99.28" evidence="2"/>
<dbReference type="EMBL" id="CP000155">
    <property type="protein sequence ID" value="ABC32533.1"/>
    <property type="molecule type" value="Genomic_DNA"/>
</dbReference>
<dbReference type="RefSeq" id="WP_011399592.1">
    <property type="nucleotide sequence ID" value="NC_007645.1"/>
</dbReference>
<dbReference type="SMR" id="Q2S9Z1"/>
<dbReference type="STRING" id="349521.HCH_05884"/>
<dbReference type="KEGG" id="hch:HCH_05884"/>
<dbReference type="eggNOG" id="COG0772">
    <property type="taxonomic scope" value="Bacteria"/>
</dbReference>
<dbReference type="HOGENOM" id="CLU_029243_1_1_6"/>
<dbReference type="OrthoDB" id="9768187at2"/>
<dbReference type="UniPathway" id="UPA00219"/>
<dbReference type="Proteomes" id="UP000000238">
    <property type="component" value="Chromosome"/>
</dbReference>
<dbReference type="GO" id="GO:0032153">
    <property type="term" value="C:cell division site"/>
    <property type="evidence" value="ECO:0007669"/>
    <property type="project" value="UniProtKB-UniRule"/>
</dbReference>
<dbReference type="GO" id="GO:0005886">
    <property type="term" value="C:plasma membrane"/>
    <property type="evidence" value="ECO:0007669"/>
    <property type="project" value="UniProtKB-SubCell"/>
</dbReference>
<dbReference type="GO" id="GO:0015648">
    <property type="term" value="F:lipid-linked peptidoglycan transporter activity"/>
    <property type="evidence" value="ECO:0007669"/>
    <property type="project" value="TreeGrafter"/>
</dbReference>
<dbReference type="GO" id="GO:0008955">
    <property type="term" value="F:peptidoglycan glycosyltransferase activity"/>
    <property type="evidence" value="ECO:0007669"/>
    <property type="project" value="UniProtKB-UniRule"/>
</dbReference>
<dbReference type="GO" id="GO:0071555">
    <property type="term" value="P:cell wall organization"/>
    <property type="evidence" value="ECO:0007669"/>
    <property type="project" value="UniProtKB-KW"/>
</dbReference>
<dbReference type="GO" id="GO:0043093">
    <property type="term" value="P:FtsZ-dependent cytokinesis"/>
    <property type="evidence" value="ECO:0007669"/>
    <property type="project" value="UniProtKB-UniRule"/>
</dbReference>
<dbReference type="GO" id="GO:0009252">
    <property type="term" value="P:peptidoglycan biosynthetic process"/>
    <property type="evidence" value="ECO:0007669"/>
    <property type="project" value="UniProtKB-UniRule"/>
</dbReference>
<dbReference type="GO" id="GO:0008360">
    <property type="term" value="P:regulation of cell shape"/>
    <property type="evidence" value="ECO:0007669"/>
    <property type="project" value="UniProtKB-KW"/>
</dbReference>
<dbReference type="HAMAP" id="MF_00913">
    <property type="entry name" value="PGT_FtsW_proteobact"/>
    <property type="match status" value="1"/>
</dbReference>
<dbReference type="InterPro" id="IPR018365">
    <property type="entry name" value="Cell_cycle_FtsW-rel_CS"/>
</dbReference>
<dbReference type="InterPro" id="IPR013437">
    <property type="entry name" value="FtsW"/>
</dbReference>
<dbReference type="InterPro" id="IPR001182">
    <property type="entry name" value="FtsW/RodA"/>
</dbReference>
<dbReference type="NCBIfam" id="TIGR02614">
    <property type="entry name" value="ftsW"/>
    <property type="match status" value="1"/>
</dbReference>
<dbReference type="PANTHER" id="PTHR30474">
    <property type="entry name" value="CELL CYCLE PROTEIN"/>
    <property type="match status" value="1"/>
</dbReference>
<dbReference type="PANTHER" id="PTHR30474:SF2">
    <property type="entry name" value="PEPTIDOGLYCAN GLYCOSYLTRANSFERASE FTSW-RELATED"/>
    <property type="match status" value="1"/>
</dbReference>
<dbReference type="Pfam" id="PF01098">
    <property type="entry name" value="FTSW_RODA_SPOVE"/>
    <property type="match status" value="1"/>
</dbReference>
<dbReference type="PROSITE" id="PS00428">
    <property type="entry name" value="FTSW_RODA_SPOVE"/>
    <property type="match status" value="1"/>
</dbReference>
<keyword id="KW-0131">Cell cycle</keyword>
<keyword id="KW-0132">Cell division</keyword>
<keyword id="KW-0997">Cell inner membrane</keyword>
<keyword id="KW-1003">Cell membrane</keyword>
<keyword id="KW-0133">Cell shape</keyword>
<keyword id="KW-0961">Cell wall biogenesis/degradation</keyword>
<keyword id="KW-0328">Glycosyltransferase</keyword>
<keyword id="KW-0472">Membrane</keyword>
<keyword id="KW-0573">Peptidoglycan synthesis</keyword>
<keyword id="KW-1185">Reference proteome</keyword>
<keyword id="KW-0808">Transferase</keyword>
<keyword id="KW-0812">Transmembrane</keyword>
<keyword id="KW-1133">Transmembrane helix</keyword>
<feature type="chain" id="PRO_0000415188" description="Probable peptidoglycan glycosyltransferase FtsW">
    <location>
        <begin position="1"/>
        <end position="397"/>
    </location>
</feature>
<feature type="topological domain" description="Cytoplasmic" evidence="1">
    <location>
        <begin position="1"/>
        <end position="18"/>
    </location>
</feature>
<feature type="transmembrane region" description="Helical" evidence="2">
    <location>
        <begin position="19"/>
        <end position="39"/>
    </location>
</feature>
<feature type="topological domain" description="Periplasmic" evidence="1">
    <location>
        <begin position="40"/>
        <end position="58"/>
    </location>
</feature>
<feature type="transmembrane region" description="Helical" evidence="2">
    <location>
        <begin position="59"/>
        <end position="79"/>
    </location>
</feature>
<feature type="topological domain" description="Cytoplasmic" evidence="1">
    <location>
        <begin position="80"/>
        <end position="83"/>
    </location>
</feature>
<feature type="transmembrane region" description="Helical" evidence="2">
    <location>
        <begin position="84"/>
        <end position="104"/>
    </location>
</feature>
<feature type="topological domain" description="Periplasmic" evidence="1">
    <location>
        <begin position="105"/>
        <end position="112"/>
    </location>
</feature>
<feature type="transmembrane region" description="Helical" evidence="2">
    <location>
        <begin position="113"/>
        <end position="133"/>
    </location>
</feature>
<feature type="topological domain" description="Cytoplasmic" evidence="1">
    <location>
        <begin position="134"/>
        <end position="148"/>
    </location>
</feature>
<feature type="transmembrane region" description="Helical" evidence="2">
    <location>
        <begin position="149"/>
        <end position="169"/>
    </location>
</feature>
<feature type="topological domain" description="Periplasmic" evidence="1">
    <location>
        <begin position="170"/>
        <end position="172"/>
    </location>
</feature>
<feature type="transmembrane region" description="Helical" evidence="2">
    <location>
        <begin position="173"/>
        <end position="193"/>
    </location>
</feature>
<feature type="topological domain" description="Cytoplasmic" evidence="1">
    <location>
        <begin position="194"/>
        <end position="196"/>
    </location>
</feature>
<feature type="transmembrane region" description="Helical" evidence="2">
    <location>
        <begin position="197"/>
        <end position="217"/>
    </location>
</feature>
<feature type="topological domain" description="Periplasmic" evidence="1">
    <location>
        <begin position="218"/>
        <end position="272"/>
    </location>
</feature>
<feature type="transmembrane region" description="Helical" evidence="2">
    <location>
        <begin position="273"/>
        <end position="293"/>
    </location>
</feature>
<feature type="topological domain" description="Cytoplasmic" evidence="1">
    <location>
        <begin position="294"/>
        <end position="316"/>
    </location>
</feature>
<feature type="transmembrane region" description="Helical" evidence="2">
    <location>
        <begin position="317"/>
        <end position="337"/>
    </location>
</feature>
<feature type="topological domain" description="Periplasmic" evidence="1">
    <location>
        <begin position="338"/>
        <end position="348"/>
    </location>
</feature>
<feature type="transmembrane region" description="Helical" evidence="2">
    <location>
        <begin position="349"/>
        <end position="369"/>
    </location>
</feature>
<feature type="topological domain" description="Cytoplasmic" evidence="1">
    <location>
        <begin position="370"/>
        <end position="397"/>
    </location>
</feature>
<organism>
    <name type="scientific">Hahella chejuensis (strain KCTC 2396)</name>
    <dbReference type="NCBI Taxonomy" id="349521"/>
    <lineage>
        <taxon>Bacteria</taxon>
        <taxon>Pseudomonadati</taxon>
        <taxon>Pseudomonadota</taxon>
        <taxon>Gammaproteobacteria</taxon>
        <taxon>Oceanospirillales</taxon>
        <taxon>Hahellaceae</taxon>
        <taxon>Hahella</taxon>
    </lineage>
</organism>
<protein>
    <recommendedName>
        <fullName evidence="2">Probable peptidoglycan glycosyltransferase FtsW</fullName>
        <shortName evidence="2">PGT</shortName>
        <ecNumber evidence="2">2.4.99.28</ecNumber>
    </recommendedName>
    <alternativeName>
        <fullName evidence="2">Cell division protein FtsW</fullName>
    </alternativeName>
    <alternativeName>
        <fullName evidence="2">Cell wall polymerase</fullName>
    </alternativeName>
    <alternativeName>
        <fullName evidence="2">Peptidoglycan polymerase</fullName>
        <shortName evidence="2">PG polymerase</shortName>
    </alternativeName>
</protein>
<evidence type="ECO:0000255" key="1"/>
<evidence type="ECO:0000255" key="2">
    <source>
        <dbReference type="HAMAP-Rule" id="MF_00913"/>
    </source>
</evidence>
<gene>
    <name evidence="2" type="primary">ftsW</name>
    <name type="ordered locus">HCH_05884</name>
</gene>
<sequence>MSALTLTASKNTQTMTLDLPLLGSALALAAIGLIMVTSASVDFADDANGQALYYMWRHLTYLLAGVAVGFVILRLPLEWWHKQSWLLLVVALGFLVAVLIPGIGRTVNGSTRWISLGVINIQASEIAKVCLAIYTASYLVRRLDEVRGSWWGFAKPLLVLMLVALLLLMEPDFGALVVTMCAVVGMIFLSGVALSRFAALLMFCVGSVALLAVSQPYRLKRLTAYTDPWADQFDSGYQLTQALIAFGRGEWSGVGLGNSVQKLFYLPEAHTDFVFAIIAEELGLLGSLLIIVLFGVLLWRGMYVSRVAERAGQLFNAYAGYGVTLLLGGQALINLGVNTGLLPTKGLTLPLISYGGSSLIISCLCVAILLRIGSEAVSGEQTEDESPKVKNRGGAQR</sequence>
<comment type="function">
    <text evidence="2">Peptidoglycan polymerase that is essential for cell division.</text>
</comment>
<comment type="catalytic activity">
    <reaction evidence="2">
        <text>[GlcNAc-(1-&gt;4)-Mur2Ac(oyl-L-Ala-gamma-D-Glu-L-Lys-D-Ala-D-Ala)](n)-di-trans,octa-cis-undecaprenyl diphosphate + beta-D-GlcNAc-(1-&gt;4)-Mur2Ac(oyl-L-Ala-gamma-D-Glu-L-Lys-D-Ala-D-Ala)-di-trans,octa-cis-undecaprenyl diphosphate = [GlcNAc-(1-&gt;4)-Mur2Ac(oyl-L-Ala-gamma-D-Glu-L-Lys-D-Ala-D-Ala)](n+1)-di-trans,octa-cis-undecaprenyl diphosphate + di-trans,octa-cis-undecaprenyl diphosphate + H(+)</text>
        <dbReference type="Rhea" id="RHEA:23708"/>
        <dbReference type="Rhea" id="RHEA-COMP:9602"/>
        <dbReference type="Rhea" id="RHEA-COMP:9603"/>
        <dbReference type="ChEBI" id="CHEBI:15378"/>
        <dbReference type="ChEBI" id="CHEBI:58405"/>
        <dbReference type="ChEBI" id="CHEBI:60033"/>
        <dbReference type="ChEBI" id="CHEBI:78435"/>
        <dbReference type="EC" id="2.4.99.28"/>
    </reaction>
</comment>
<comment type="pathway">
    <text evidence="2">Cell wall biogenesis; peptidoglycan biosynthesis.</text>
</comment>
<comment type="subcellular location">
    <subcellularLocation>
        <location evidence="2">Cell inner membrane</location>
        <topology evidence="2">Multi-pass membrane protein</topology>
    </subcellularLocation>
    <text evidence="2">Localizes to the division septum.</text>
</comment>
<comment type="similarity">
    <text evidence="2">Belongs to the SEDS family. FtsW subfamily.</text>
</comment>
<proteinExistence type="inferred from homology"/>
<name>FTSW_HAHCH</name>
<reference key="1">
    <citation type="journal article" date="2005" name="Nucleic Acids Res.">
        <title>Genomic blueprint of Hahella chejuensis, a marine microbe producing an algicidal agent.</title>
        <authorList>
            <person name="Jeong H."/>
            <person name="Yim J.H."/>
            <person name="Lee C."/>
            <person name="Choi S.-H."/>
            <person name="Park Y.K."/>
            <person name="Yoon S.H."/>
            <person name="Hur C.-G."/>
            <person name="Kang H.-Y."/>
            <person name="Kim D."/>
            <person name="Lee H.H."/>
            <person name="Park K.H."/>
            <person name="Park S.-H."/>
            <person name="Park H.-S."/>
            <person name="Lee H.K."/>
            <person name="Oh T.K."/>
            <person name="Kim J.F."/>
        </authorList>
    </citation>
    <scope>NUCLEOTIDE SEQUENCE [LARGE SCALE GENOMIC DNA]</scope>
    <source>
        <strain>KCTC 2396</strain>
    </source>
</reference>
<accession>Q2S9Z1</accession>